<comment type="function">
    <text evidence="1">IGPS catalyzes the conversion of PRFAR and glutamine to IGP, AICAR and glutamate. The HisF subunit catalyzes the cyclization activity that produces IGP and AICAR from PRFAR using the ammonia provided by the HisH subunit.</text>
</comment>
<comment type="catalytic activity">
    <reaction evidence="1">
        <text>5-[(5-phospho-1-deoxy-D-ribulos-1-ylimino)methylamino]-1-(5-phospho-beta-D-ribosyl)imidazole-4-carboxamide + L-glutamine = D-erythro-1-(imidazol-4-yl)glycerol 3-phosphate + 5-amino-1-(5-phospho-beta-D-ribosyl)imidazole-4-carboxamide + L-glutamate + H(+)</text>
        <dbReference type="Rhea" id="RHEA:24793"/>
        <dbReference type="ChEBI" id="CHEBI:15378"/>
        <dbReference type="ChEBI" id="CHEBI:29985"/>
        <dbReference type="ChEBI" id="CHEBI:58278"/>
        <dbReference type="ChEBI" id="CHEBI:58359"/>
        <dbReference type="ChEBI" id="CHEBI:58475"/>
        <dbReference type="ChEBI" id="CHEBI:58525"/>
        <dbReference type="EC" id="4.3.2.10"/>
    </reaction>
</comment>
<comment type="pathway">
    <text evidence="1">Amino-acid biosynthesis; L-histidine biosynthesis; L-histidine from 5-phospho-alpha-D-ribose 1-diphosphate: step 5/9.</text>
</comment>
<comment type="subunit">
    <text evidence="1">Heterodimer of HisH and HisF.</text>
</comment>
<comment type="subcellular location">
    <subcellularLocation>
        <location evidence="1">Cytoplasm</location>
    </subcellularLocation>
</comment>
<comment type="similarity">
    <text evidence="1">Belongs to the HisA/HisF family.</text>
</comment>
<accession>Q6G602</accession>
<protein>
    <recommendedName>
        <fullName evidence="1">Imidazole glycerol phosphate synthase subunit HisF</fullName>
        <ecNumber evidence="1">4.3.2.10</ecNumber>
    </recommendedName>
    <alternativeName>
        <fullName evidence="1">IGP synthase cyclase subunit</fullName>
    </alternativeName>
    <alternativeName>
        <fullName evidence="1">IGP synthase subunit HisF</fullName>
    </alternativeName>
    <alternativeName>
        <fullName evidence="1">ImGP synthase subunit HisF</fullName>
        <shortName evidence="1">IGPS subunit HisF</shortName>
    </alternativeName>
</protein>
<organism>
    <name type="scientific">Staphylococcus aureus (strain MSSA476)</name>
    <dbReference type="NCBI Taxonomy" id="282459"/>
    <lineage>
        <taxon>Bacteria</taxon>
        <taxon>Bacillati</taxon>
        <taxon>Bacillota</taxon>
        <taxon>Bacilli</taxon>
        <taxon>Bacillales</taxon>
        <taxon>Staphylococcaceae</taxon>
        <taxon>Staphylococcus</taxon>
    </lineage>
</organism>
<proteinExistence type="inferred from homology"/>
<feature type="chain" id="PRO_0000142234" description="Imidazole glycerol phosphate synthase subunit HisF">
    <location>
        <begin position="1"/>
        <end position="252"/>
    </location>
</feature>
<feature type="active site" evidence="1">
    <location>
        <position position="11"/>
    </location>
</feature>
<feature type="active site" evidence="1">
    <location>
        <position position="130"/>
    </location>
</feature>
<sequence length="252" mass="27499">MIKKRIIPCLDVKDGRVVKGIQFKGLRDIGNPVDLAMYYNEAGADELVFLDISKTEEGHSLMLEVIEQTASRLFIPLTVGGGIQSLDDITQLLNHGADKVSLNSSALKNPQLIKQASDKFGRQCICIAIDSYYDPERKAHYCCTTGGKKMTNIKVYDWVQQVEQLGAGELLVTSMGHDGMKQGFDIEHLANIKSLVNIPIIASGGGGNAQHFVELFDQTDVSAGLAASILHDRETTVQSIKEVIRQGGIAVR</sequence>
<name>HIS6_STAAS</name>
<dbReference type="EC" id="4.3.2.10" evidence="1"/>
<dbReference type="EMBL" id="BX571857">
    <property type="protein sequence ID" value="CAG44375.1"/>
    <property type="molecule type" value="Genomic_DNA"/>
</dbReference>
<dbReference type="SMR" id="Q6G602"/>
<dbReference type="KEGG" id="sas:SAS2558"/>
<dbReference type="HOGENOM" id="CLU_048577_4_0_9"/>
<dbReference type="UniPathway" id="UPA00031">
    <property type="reaction ID" value="UER00010"/>
</dbReference>
<dbReference type="GO" id="GO:0005737">
    <property type="term" value="C:cytoplasm"/>
    <property type="evidence" value="ECO:0007669"/>
    <property type="project" value="UniProtKB-SubCell"/>
</dbReference>
<dbReference type="GO" id="GO:0000107">
    <property type="term" value="F:imidazoleglycerol-phosphate synthase activity"/>
    <property type="evidence" value="ECO:0007669"/>
    <property type="project" value="UniProtKB-UniRule"/>
</dbReference>
<dbReference type="GO" id="GO:0016829">
    <property type="term" value="F:lyase activity"/>
    <property type="evidence" value="ECO:0007669"/>
    <property type="project" value="UniProtKB-KW"/>
</dbReference>
<dbReference type="GO" id="GO:0000105">
    <property type="term" value="P:L-histidine biosynthetic process"/>
    <property type="evidence" value="ECO:0007669"/>
    <property type="project" value="UniProtKB-UniRule"/>
</dbReference>
<dbReference type="CDD" id="cd04731">
    <property type="entry name" value="HisF"/>
    <property type="match status" value="1"/>
</dbReference>
<dbReference type="FunFam" id="3.20.20.70:FF:000462">
    <property type="entry name" value="Multifunctional fusion protein"/>
    <property type="match status" value="1"/>
</dbReference>
<dbReference type="Gene3D" id="3.20.20.70">
    <property type="entry name" value="Aldolase class I"/>
    <property type="match status" value="1"/>
</dbReference>
<dbReference type="HAMAP" id="MF_01013">
    <property type="entry name" value="HisF"/>
    <property type="match status" value="1"/>
</dbReference>
<dbReference type="InterPro" id="IPR013785">
    <property type="entry name" value="Aldolase_TIM"/>
</dbReference>
<dbReference type="InterPro" id="IPR006062">
    <property type="entry name" value="His_biosynth"/>
</dbReference>
<dbReference type="InterPro" id="IPR004651">
    <property type="entry name" value="HisF"/>
</dbReference>
<dbReference type="InterPro" id="IPR050064">
    <property type="entry name" value="IGPS_HisA/HisF"/>
</dbReference>
<dbReference type="InterPro" id="IPR011060">
    <property type="entry name" value="RibuloseP-bd_barrel"/>
</dbReference>
<dbReference type="NCBIfam" id="TIGR00735">
    <property type="entry name" value="hisF"/>
    <property type="match status" value="1"/>
</dbReference>
<dbReference type="PANTHER" id="PTHR21235:SF2">
    <property type="entry name" value="IMIDAZOLE GLYCEROL PHOSPHATE SYNTHASE HISHF"/>
    <property type="match status" value="1"/>
</dbReference>
<dbReference type="PANTHER" id="PTHR21235">
    <property type="entry name" value="IMIDAZOLE GLYCEROL PHOSPHATE SYNTHASE SUBUNIT HISF/H IGP SYNTHASE SUBUNIT HISF/H"/>
    <property type="match status" value="1"/>
</dbReference>
<dbReference type="Pfam" id="PF00977">
    <property type="entry name" value="His_biosynth"/>
    <property type="match status" value="1"/>
</dbReference>
<dbReference type="SUPFAM" id="SSF51366">
    <property type="entry name" value="Ribulose-phoshate binding barrel"/>
    <property type="match status" value="1"/>
</dbReference>
<reference key="1">
    <citation type="journal article" date="2004" name="Proc. Natl. Acad. Sci. U.S.A.">
        <title>Complete genomes of two clinical Staphylococcus aureus strains: evidence for the rapid evolution of virulence and drug resistance.</title>
        <authorList>
            <person name="Holden M.T.G."/>
            <person name="Feil E.J."/>
            <person name="Lindsay J.A."/>
            <person name="Peacock S.J."/>
            <person name="Day N.P.J."/>
            <person name="Enright M.C."/>
            <person name="Foster T.J."/>
            <person name="Moore C.E."/>
            <person name="Hurst L."/>
            <person name="Atkin R."/>
            <person name="Barron A."/>
            <person name="Bason N."/>
            <person name="Bentley S.D."/>
            <person name="Chillingworth C."/>
            <person name="Chillingworth T."/>
            <person name="Churcher C."/>
            <person name="Clark L."/>
            <person name="Corton C."/>
            <person name="Cronin A."/>
            <person name="Doggett J."/>
            <person name="Dowd L."/>
            <person name="Feltwell T."/>
            <person name="Hance Z."/>
            <person name="Harris B."/>
            <person name="Hauser H."/>
            <person name="Holroyd S."/>
            <person name="Jagels K."/>
            <person name="James K.D."/>
            <person name="Lennard N."/>
            <person name="Line A."/>
            <person name="Mayes R."/>
            <person name="Moule S."/>
            <person name="Mungall K."/>
            <person name="Ormond D."/>
            <person name="Quail M.A."/>
            <person name="Rabbinowitsch E."/>
            <person name="Rutherford K.M."/>
            <person name="Sanders M."/>
            <person name="Sharp S."/>
            <person name="Simmonds M."/>
            <person name="Stevens K."/>
            <person name="Whitehead S."/>
            <person name="Barrell B.G."/>
            <person name="Spratt B.G."/>
            <person name="Parkhill J."/>
        </authorList>
    </citation>
    <scope>NUCLEOTIDE SEQUENCE [LARGE SCALE GENOMIC DNA]</scope>
    <source>
        <strain>MSSA476</strain>
    </source>
</reference>
<evidence type="ECO:0000255" key="1">
    <source>
        <dbReference type="HAMAP-Rule" id="MF_01013"/>
    </source>
</evidence>
<keyword id="KW-0028">Amino-acid biosynthesis</keyword>
<keyword id="KW-0963">Cytoplasm</keyword>
<keyword id="KW-0368">Histidine biosynthesis</keyword>
<keyword id="KW-0456">Lyase</keyword>
<gene>
    <name evidence="1" type="primary">hisF</name>
    <name type="ordered locus">SAS2558</name>
</gene>